<gene>
    <name type="primary">MT-ND4L</name>
    <name type="synonym">MTND4L</name>
    <name type="synonym">NADH4L</name>
    <name type="synonym">ND4L</name>
</gene>
<comment type="function">
    <text evidence="1">Core subunit of the mitochondrial membrane respiratory chain NADH dehydrogenase (Complex I) which catalyzes electron transfer from NADH through the respiratory chain, using ubiquinone as an electron acceptor. Part of the enzyme membrane arm which is embedded in the lipid bilayer and involved in proton translocation.</text>
</comment>
<comment type="catalytic activity">
    <reaction evidence="1">
        <text>a ubiquinone + NADH + 5 H(+)(in) = a ubiquinol + NAD(+) + 4 H(+)(out)</text>
        <dbReference type="Rhea" id="RHEA:29091"/>
        <dbReference type="Rhea" id="RHEA-COMP:9565"/>
        <dbReference type="Rhea" id="RHEA-COMP:9566"/>
        <dbReference type="ChEBI" id="CHEBI:15378"/>
        <dbReference type="ChEBI" id="CHEBI:16389"/>
        <dbReference type="ChEBI" id="CHEBI:17976"/>
        <dbReference type="ChEBI" id="CHEBI:57540"/>
        <dbReference type="ChEBI" id="CHEBI:57945"/>
        <dbReference type="EC" id="7.1.1.2"/>
    </reaction>
    <physiologicalReaction direction="left-to-right" evidence="1">
        <dbReference type="Rhea" id="RHEA:29092"/>
    </physiologicalReaction>
</comment>
<comment type="subunit">
    <text evidence="2">Core subunit of respiratory chain NADH dehydrogenase (Complex I) which is composed of 45 different subunits.</text>
</comment>
<comment type="subcellular location">
    <subcellularLocation>
        <location evidence="2">Mitochondrion inner membrane</location>
        <topology evidence="3">Multi-pass membrane protein</topology>
    </subcellularLocation>
</comment>
<comment type="similarity">
    <text evidence="4">Belongs to the complex I subunit 4L family.</text>
</comment>
<name>NU4LM_ISOMA</name>
<dbReference type="EC" id="7.1.1.2"/>
<dbReference type="EMBL" id="AF358864">
    <property type="protein sequence ID" value="AAK38289.1"/>
    <property type="molecule type" value="Genomic_DNA"/>
</dbReference>
<dbReference type="RefSeq" id="NP_112659.1">
    <property type="nucleotide sequence ID" value="NC_002746.1"/>
</dbReference>
<dbReference type="SMR" id="Q9B2G1"/>
<dbReference type="GeneID" id="803008"/>
<dbReference type="CTD" id="4539"/>
<dbReference type="GO" id="GO:0005743">
    <property type="term" value="C:mitochondrial inner membrane"/>
    <property type="evidence" value="ECO:0000250"/>
    <property type="project" value="UniProtKB"/>
</dbReference>
<dbReference type="GO" id="GO:0045271">
    <property type="term" value="C:respiratory chain complex I"/>
    <property type="evidence" value="ECO:0000250"/>
    <property type="project" value="UniProtKB"/>
</dbReference>
<dbReference type="GO" id="GO:0008137">
    <property type="term" value="F:NADH dehydrogenase (ubiquinone) activity"/>
    <property type="evidence" value="ECO:0000250"/>
    <property type="project" value="UniProtKB"/>
</dbReference>
<dbReference type="GO" id="GO:0042773">
    <property type="term" value="P:ATP synthesis coupled electron transport"/>
    <property type="evidence" value="ECO:0007669"/>
    <property type="project" value="InterPro"/>
</dbReference>
<dbReference type="FunFam" id="1.10.287.3510:FF:000002">
    <property type="entry name" value="NADH-ubiquinone oxidoreductase chain 4L"/>
    <property type="match status" value="1"/>
</dbReference>
<dbReference type="Gene3D" id="1.10.287.3510">
    <property type="match status" value="1"/>
</dbReference>
<dbReference type="InterPro" id="IPR001133">
    <property type="entry name" value="NADH_UbQ_OxRdtase_chain4L/K"/>
</dbReference>
<dbReference type="InterPro" id="IPR039428">
    <property type="entry name" value="NUOK/Mnh_C1-like"/>
</dbReference>
<dbReference type="PANTHER" id="PTHR11434:SF0">
    <property type="entry name" value="NADH-UBIQUINONE OXIDOREDUCTASE CHAIN 4L"/>
    <property type="match status" value="1"/>
</dbReference>
<dbReference type="PANTHER" id="PTHR11434">
    <property type="entry name" value="NADH-UBIQUINONE OXIDOREDUCTASE SUBUNIT ND4L"/>
    <property type="match status" value="1"/>
</dbReference>
<dbReference type="Pfam" id="PF00420">
    <property type="entry name" value="Oxidored_q2"/>
    <property type="match status" value="1"/>
</dbReference>
<proteinExistence type="inferred from homology"/>
<geneLocation type="mitochondrion"/>
<feature type="chain" id="PRO_0000275032" description="NADH-ubiquinone oxidoreductase chain 4L">
    <location>
        <begin position="1"/>
        <end position="98"/>
    </location>
</feature>
<feature type="transmembrane region" description="Helical" evidence="3">
    <location>
        <begin position="1"/>
        <end position="21"/>
    </location>
</feature>
<feature type="transmembrane region" description="Helical" evidence="3">
    <location>
        <begin position="28"/>
        <end position="48"/>
    </location>
</feature>
<feature type="transmembrane region" description="Helical" evidence="3">
    <location>
        <begin position="59"/>
        <end position="79"/>
    </location>
</feature>
<evidence type="ECO:0000250" key="1">
    <source>
        <dbReference type="UniProtKB" id="P03901"/>
    </source>
</evidence>
<evidence type="ECO:0000250" key="2">
    <source>
        <dbReference type="UniProtKB" id="P03902"/>
    </source>
</evidence>
<evidence type="ECO:0000255" key="3"/>
<evidence type="ECO:0000305" key="4"/>
<sequence length="98" mass="10770">MAPINLNLILAFSLALLGVLIYRTHLMSTLLCLEGMMLSLFILMTLLISHFHMYSMSMAPLILLVFSACEAGVGLALLVKISTSHGNDYVQNLNLLQC</sequence>
<accession>Q9B2G1</accession>
<keyword id="KW-0249">Electron transport</keyword>
<keyword id="KW-0472">Membrane</keyword>
<keyword id="KW-0496">Mitochondrion</keyword>
<keyword id="KW-0999">Mitochondrion inner membrane</keyword>
<keyword id="KW-0520">NAD</keyword>
<keyword id="KW-0679">Respiratory chain</keyword>
<keyword id="KW-1278">Translocase</keyword>
<keyword id="KW-0812">Transmembrane</keyword>
<keyword id="KW-1133">Transmembrane helix</keyword>
<keyword id="KW-0813">Transport</keyword>
<keyword id="KW-0830">Ubiquinone</keyword>
<organism>
    <name type="scientific">Isoodon macrourus</name>
    <name type="common">Short-nosed bandicoot</name>
    <name type="synonym">Northern brown bandicoot</name>
    <dbReference type="NCBI Taxonomy" id="37698"/>
    <lineage>
        <taxon>Eukaryota</taxon>
        <taxon>Metazoa</taxon>
        <taxon>Chordata</taxon>
        <taxon>Craniata</taxon>
        <taxon>Vertebrata</taxon>
        <taxon>Euteleostomi</taxon>
        <taxon>Mammalia</taxon>
        <taxon>Metatheria</taxon>
        <taxon>Peramelemorphia</taxon>
        <taxon>Peramelidae</taxon>
        <taxon>Isoodon</taxon>
    </lineage>
</organism>
<reference key="1">
    <citation type="journal article" date="2001" name="Proc. R. Soc. B">
        <title>Mitochondrial genomes of a bandicoot and a brushtail possum confirm the monophyly of australidelphian marsupials.</title>
        <authorList>
            <person name="Phillips M.J."/>
            <person name="Lin Y.-H."/>
            <person name="Harrison G.L."/>
            <person name="Penny D."/>
        </authorList>
    </citation>
    <scope>NUCLEOTIDE SEQUENCE [GENOMIC DNA]</scope>
</reference>
<protein>
    <recommendedName>
        <fullName>NADH-ubiquinone oxidoreductase chain 4L</fullName>
        <ecNumber>7.1.1.2</ecNumber>
    </recommendedName>
    <alternativeName>
        <fullName>NADH dehydrogenase subunit 4L</fullName>
    </alternativeName>
</protein>